<sequence>MNKAILAVAMVLLLAGCATKPEEIGRAPDLSPVAAHLGMQNNPQFNGYPARPGKASYSLWDQRSTNFFKDPRAATPGDVLTVIISINDRANLDNKTDRERVSKGIYGGGGSFATSSITGAAAGGDMDASINTHSDSKSKGKGTIERSEDIRLQIAAIVTDTLPNGNLIIRGSQEVRVNNELRVLNVAGVVRPRDISGNNTISYDKIAEARISYGGRGRLSEIQQPPYGQQILDQFSPF</sequence>
<keyword id="KW-0975">Bacterial flagellum</keyword>
<keyword id="KW-0998">Cell outer membrane</keyword>
<keyword id="KW-0449">Lipoprotein</keyword>
<keyword id="KW-0472">Membrane</keyword>
<keyword id="KW-0564">Palmitate</keyword>
<keyword id="KW-1185">Reference proteome</keyword>
<keyword id="KW-0732">Signal</keyword>
<evidence type="ECO:0000255" key="1">
    <source>
        <dbReference type="HAMAP-Rule" id="MF_00415"/>
    </source>
</evidence>
<name>FLGH_BRUC2</name>
<gene>
    <name evidence="1" type="primary">flgH</name>
    <name type="ordered locus">BCAN_B0159</name>
</gene>
<dbReference type="EMBL" id="CP000873">
    <property type="protein sequence ID" value="ABX63355.1"/>
    <property type="molecule type" value="Genomic_DNA"/>
</dbReference>
<dbReference type="RefSeq" id="WP_004690008.1">
    <property type="nucleotide sequence ID" value="NC_010104.1"/>
</dbReference>
<dbReference type="SMR" id="A9MDR7"/>
<dbReference type="GeneID" id="55591882"/>
<dbReference type="KEGG" id="bcs:BCAN_B0159"/>
<dbReference type="HOGENOM" id="CLU_069313_1_2_5"/>
<dbReference type="PhylomeDB" id="A9MDR7"/>
<dbReference type="Proteomes" id="UP000001385">
    <property type="component" value="Chromosome II"/>
</dbReference>
<dbReference type="GO" id="GO:0009427">
    <property type="term" value="C:bacterial-type flagellum basal body, distal rod, L ring"/>
    <property type="evidence" value="ECO:0007669"/>
    <property type="project" value="InterPro"/>
</dbReference>
<dbReference type="GO" id="GO:0009279">
    <property type="term" value="C:cell outer membrane"/>
    <property type="evidence" value="ECO:0007669"/>
    <property type="project" value="UniProtKB-SubCell"/>
</dbReference>
<dbReference type="GO" id="GO:0003774">
    <property type="term" value="F:cytoskeletal motor activity"/>
    <property type="evidence" value="ECO:0007669"/>
    <property type="project" value="InterPro"/>
</dbReference>
<dbReference type="GO" id="GO:0071973">
    <property type="term" value="P:bacterial-type flagellum-dependent cell motility"/>
    <property type="evidence" value="ECO:0007669"/>
    <property type="project" value="InterPro"/>
</dbReference>
<dbReference type="HAMAP" id="MF_00415">
    <property type="entry name" value="FlgH"/>
    <property type="match status" value="1"/>
</dbReference>
<dbReference type="InterPro" id="IPR000527">
    <property type="entry name" value="Flag_Lring"/>
</dbReference>
<dbReference type="NCBIfam" id="NF001305">
    <property type="entry name" value="PRK00249.1-5"/>
    <property type="match status" value="1"/>
</dbReference>
<dbReference type="PANTHER" id="PTHR34933">
    <property type="entry name" value="FLAGELLAR L-RING PROTEIN"/>
    <property type="match status" value="1"/>
</dbReference>
<dbReference type="PANTHER" id="PTHR34933:SF1">
    <property type="entry name" value="FLAGELLAR L-RING PROTEIN"/>
    <property type="match status" value="1"/>
</dbReference>
<dbReference type="Pfam" id="PF02107">
    <property type="entry name" value="FlgH"/>
    <property type="match status" value="1"/>
</dbReference>
<dbReference type="PRINTS" id="PR01008">
    <property type="entry name" value="FLGLRINGFLGH"/>
</dbReference>
<dbReference type="PROSITE" id="PS51257">
    <property type="entry name" value="PROKAR_LIPOPROTEIN"/>
    <property type="match status" value="1"/>
</dbReference>
<proteinExistence type="inferred from homology"/>
<feature type="signal peptide" evidence="1">
    <location>
        <begin position="1"/>
        <end position="16"/>
    </location>
</feature>
<feature type="chain" id="PRO_1000080508" description="Flagellar L-ring protein">
    <location>
        <begin position="17"/>
        <end position="238"/>
    </location>
</feature>
<feature type="lipid moiety-binding region" description="N-palmitoyl cysteine" evidence="1">
    <location>
        <position position="17"/>
    </location>
</feature>
<feature type="lipid moiety-binding region" description="S-diacylglycerol cysteine" evidence="1">
    <location>
        <position position="17"/>
    </location>
</feature>
<protein>
    <recommendedName>
        <fullName evidence="1">Flagellar L-ring protein</fullName>
    </recommendedName>
    <alternativeName>
        <fullName evidence="1">Basal body L-ring protein</fullName>
    </alternativeName>
</protein>
<accession>A9MDR7</accession>
<comment type="function">
    <text evidence="1">Assembles around the rod to form the L-ring and probably protects the motor/basal body from shearing forces during rotation.</text>
</comment>
<comment type="subunit">
    <text evidence="1">The basal body constitutes a major portion of the flagellar organelle and consists of four rings (L,P,S, and M) mounted on a central rod.</text>
</comment>
<comment type="subcellular location">
    <subcellularLocation>
        <location evidence="1">Cell outer membrane</location>
        <topology evidence="1">Lipid-anchor</topology>
    </subcellularLocation>
    <subcellularLocation>
        <location evidence="1">Bacterial flagellum basal body</location>
    </subcellularLocation>
</comment>
<comment type="similarity">
    <text evidence="1">Belongs to the FlgH family.</text>
</comment>
<organism>
    <name type="scientific">Brucella canis (strain ATCC 23365 / NCTC 10854 / RM-666)</name>
    <dbReference type="NCBI Taxonomy" id="483179"/>
    <lineage>
        <taxon>Bacteria</taxon>
        <taxon>Pseudomonadati</taxon>
        <taxon>Pseudomonadota</taxon>
        <taxon>Alphaproteobacteria</taxon>
        <taxon>Hyphomicrobiales</taxon>
        <taxon>Brucellaceae</taxon>
        <taxon>Brucella/Ochrobactrum group</taxon>
        <taxon>Brucella</taxon>
    </lineage>
</organism>
<reference key="1">
    <citation type="submission" date="2007-10" db="EMBL/GenBank/DDBJ databases">
        <title>Brucella canis ATCC 23365 whole genome shotgun sequencing project.</title>
        <authorList>
            <person name="Setubal J.C."/>
            <person name="Bowns C."/>
            <person name="Boyle S."/>
            <person name="Crasta O.R."/>
            <person name="Czar M.J."/>
            <person name="Dharmanolla C."/>
            <person name="Gillespie J.J."/>
            <person name="Kenyon R.W."/>
            <person name="Lu J."/>
            <person name="Mane S."/>
            <person name="Mohapatra S."/>
            <person name="Nagrani S."/>
            <person name="Purkayastha A."/>
            <person name="Rajasimha H.K."/>
            <person name="Shallom J.M."/>
            <person name="Shallom S."/>
            <person name="Shukla M."/>
            <person name="Snyder E.E."/>
            <person name="Sobral B.W."/>
            <person name="Wattam A.R."/>
            <person name="Will R."/>
            <person name="Williams K."/>
            <person name="Yoo H."/>
            <person name="Bruce D."/>
            <person name="Detter C."/>
            <person name="Munk C."/>
            <person name="Brettin T.S."/>
        </authorList>
    </citation>
    <scope>NUCLEOTIDE SEQUENCE [LARGE SCALE GENOMIC DNA]</scope>
    <source>
        <strain>ATCC 23365 / NCTC 10854 / RM-666</strain>
    </source>
</reference>